<sequence>MKTGALATFLALCLPVTVFATTLRLSNEVDLLVLDGKKVSSSLLRGAESIELENGPHQLVFRVEKTIRLPGNEERLYISPPLVISFDTQLISQVNFQLPRLENEREASHFNAAPRLALLDGDAMPIPVKLDILAITSTAKVVDYEIETERYNKSAKRASLPQFATMMADDSTLLSDVSELDTVPPQSQTLTEQRLKYWFRLADPQTRHHFLQWAEKQPPS</sequence>
<dbReference type="EMBL" id="AM933173">
    <property type="protein sequence ID" value="CAR36857.1"/>
    <property type="molecule type" value="Genomic_DNA"/>
</dbReference>
<dbReference type="RefSeq" id="WP_000847719.1">
    <property type="nucleotide sequence ID" value="NC_011274.1"/>
</dbReference>
<dbReference type="KEGG" id="seg:SG0967"/>
<dbReference type="HOGENOM" id="CLU_073782_2_0_6"/>
<dbReference type="Proteomes" id="UP000008321">
    <property type="component" value="Chromosome"/>
</dbReference>
<dbReference type="HAMAP" id="MF_00789">
    <property type="entry name" value="UPF0319"/>
    <property type="match status" value="1"/>
</dbReference>
<dbReference type="InterPro" id="IPR018635">
    <property type="entry name" value="UPF0319"/>
</dbReference>
<dbReference type="NCBIfam" id="NF047712">
    <property type="entry name" value="CrliSynInhib"/>
    <property type="match status" value="1"/>
</dbReference>
<dbReference type="NCBIfam" id="NF002967">
    <property type="entry name" value="PRK03641.1"/>
    <property type="match status" value="1"/>
</dbReference>
<dbReference type="PANTHER" id="PTHR38108">
    <property type="entry name" value="UPF0319 PROTEIN YCCT"/>
    <property type="match status" value="1"/>
</dbReference>
<dbReference type="PANTHER" id="PTHR38108:SF1">
    <property type="entry name" value="UPF0319 PROTEIN YCCT"/>
    <property type="match status" value="1"/>
</dbReference>
<dbReference type="Pfam" id="PF09829">
    <property type="entry name" value="DUF2057"/>
    <property type="match status" value="1"/>
</dbReference>
<evidence type="ECO:0000255" key="1">
    <source>
        <dbReference type="HAMAP-Rule" id="MF_00789"/>
    </source>
</evidence>
<name>YCCT_SALG2</name>
<organism>
    <name type="scientific">Salmonella gallinarum (strain 287/91 / NCTC 13346)</name>
    <dbReference type="NCBI Taxonomy" id="550538"/>
    <lineage>
        <taxon>Bacteria</taxon>
        <taxon>Pseudomonadati</taxon>
        <taxon>Pseudomonadota</taxon>
        <taxon>Gammaproteobacteria</taxon>
        <taxon>Enterobacterales</taxon>
        <taxon>Enterobacteriaceae</taxon>
        <taxon>Salmonella</taxon>
    </lineage>
</organism>
<proteinExistence type="inferred from homology"/>
<comment type="similarity">
    <text evidence="1">Belongs to the UPF0319 family.</text>
</comment>
<gene>
    <name evidence="1" type="primary">yccT</name>
    <name type="ordered locus">SG0967</name>
</gene>
<feature type="signal peptide" evidence="1">
    <location>
        <begin position="1"/>
        <end position="20"/>
    </location>
</feature>
<feature type="chain" id="PRO_5000397999" description="UPF0319 protein YccT">
    <location>
        <begin position="21"/>
        <end position="220"/>
    </location>
</feature>
<accession>B5R6D0</accession>
<protein>
    <recommendedName>
        <fullName evidence="1">UPF0319 protein YccT</fullName>
    </recommendedName>
</protein>
<reference key="1">
    <citation type="journal article" date="2008" name="Genome Res.">
        <title>Comparative genome analysis of Salmonella enteritidis PT4 and Salmonella gallinarum 287/91 provides insights into evolutionary and host adaptation pathways.</title>
        <authorList>
            <person name="Thomson N.R."/>
            <person name="Clayton D.J."/>
            <person name="Windhorst D."/>
            <person name="Vernikos G."/>
            <person name="Davidson S."/>
            <person name="Churcher C."/>
            <person name="Quail M.A."/>
            <person name="Stevens M."/>
            <person name="Jones M.A."/>
            <person name="Watson M."/>
            <person name="Barron A."/>
            <person name="Layton A."/>
            <person name="Pickard D."/>
            <person name="Kingsley R.A."/>
            <person name="Bignell A."/>
            <person name="Clark L."/>
            <person name="Harris B."/>
            <person name="Ormond D."/>
            <person name="Abdellah Z."/>
            <person name="Brooks K."/>
            <person name="Cherevach I."/>
            <person name="Chillingworth T."/>
            <person name="Woodward J."/>
            <person name="Norberczak H."/>
            <person name="Lord A."/>
            <person name="Arrowsmith C."/>
            <person name="Jagels K."/>
            <person name="Moule S."/>
            <person name="Mungall K."/>
            <person name="Saunders M."/>
            <person name="Whitehead S."/>
            <person name="Chabalgoity J.A."/>
            <person name="Maskell D."/>
            <person name="Humphreys T."/>
            <person name="Roberts M."/>
            <person name="Barrow P.A."/>
            <person name="Dougan G."/>
            <person name="Parkhill J."/>
        </authorList>
    </citation>
    <scope>NUCLEOTIDE SEQUENCE [LARGE SCALE GENOMIC DNA]</scope>
    <source>
        <strain>287/91 / NCTC 13346</strain>
    </source>
</reference>
<keyword id="KW-0732">Signal</keyword>